<organism>
    <name type="scientific">Schizosaccharomyces pombe (strain 972 / ATCC 24843)</name>
    <name type="common">Fission yeast</name>
    <dbReference type="NCBI Taxonomy" id="284812"/>
    <lineage>
        <taxon>Eukaryota</taxon>
        <taxon>Fungi</taxon>
        <taxon>Dikarya</taxon>
        <taxon>Ascomycota</taxon>
        <taxon>Taphrinomycotina</taxon>
        <taxon>Schizosaccharomycetes</taxon>
        <taxon>Schizosaccharomycetales</taxon>
        <taxon>Schizosaccharomycetaceae</taxon>
        <taxon>Schizosaccharomyces</taxon>
    </lineage>
</organism>
<proteinExistence type="evidence at protein level"/>
<evidence type="ECO:0000250" key="1">
    <source>
        <dbReference type="UniProtKB" id="A0A218N034"/>
    </source>
</evidence>
<evidence type="ECO:0000250" key="2">
    <source>
        <dbReference type="UniProtKB" id="A0A482AT42"/>
    </source>
</evidence>
<evidence type="ECO:0000255" key="3"/>
<evidence type="ECO:0000256" key="4">
    <source>
        <dbReference type="SAM" id="MobiDB-lite"/>
    </source>
</evidence>
<evidence type="ECO:0000269" key="5">
    <source>
    </source>
</evidence>
<evidence type="ECO:0000305" key="6"/>
<evidence type="ECO:0000305" key="7">
    <source>
    </source>
</evidence>
<evidence type="ECO:0000312" key="8">
    <source>
        <dbReference type="PomBase" id="SPCC663.17"/>
    </source>
</evidence>
<comment type="function">
    <text evidence="1">May act in meiotic drive.</text>
</comment>
<comment type="subcellular location">
    <subcellularLocation>
        <location evidence="2 3">Spore membrane</location>
        <topology evidence="3">Multi-pass membrane protein</topology>
    </subcellularLocation>
</comment>
<comment type="developmental stage">
    <text evidence="5">Present following meiosis I (at protein level).</text>
</comment>
<comment type="disruption phenotype">
    <text evidence="5">Simultaneous knockout of wtf14 results in normal vegetative cell population growth (PubMed:32032353). Simultaneous knockout of wtf14, wtf11 and wtf7 results in normal spore viability (PubMed:32032353).</text>
</comment>
<comment type="miscellaneous">
    <text evidence="7">Although the gene is capable of encoding two isoforms, RNA sequencing data show no evidence of alternative transcripts.</text>
</comment>
<comment type="similarity">
    <text evidence="6">Belongs to the WTF family.</text>
</comment>
<keyword id="KW-0472">Membrane</keyword>
<keyword id="KW-1185">Reference proteome</keyword>
<keyword id="KW-0812">Transmembrane</keyword>
<keyword id="KW-1133">Transmembrane helix</keyword>
<dbReference type="EMBL" id="CU329672">
    <property type="protein sequence ID" value="CAO77692.2"/>
    <property type="molecule type" value="Genomic_DNA"/>
</dbReference>
<dbReference type="RefSeq" id="XP_004001750.1">
    <property type="nucleotide sequence ID" value="XM_004001701.1"/>
</dbReference>
<dbReference type="SMR" id="G2TRU7"/>
<dbReference type="BioGRID" id="280193">
    <property type="interactions" value="16"/>
</dbReference>
<dbReference type="PaxDb" id="4896-SPCC663.17.1"/>
<dbReference type="EnsemblFungi" id="SPCC663.17.1">
    <property type="protein sequence ID" value="SPCC663.17.1:pep"/>
    <property type="gene ID" value="SPCC663.17"/>
</dbReference>
<dbReference type="PomBase" id="SPCC663.17">
    <property type="gene designation" value="wtf15"/>
</dbReference>
<dbReference type="VEuPathDB" id="FungiDB:SPCC663.17"/>
<dbReference type="HOGENOM" id="CLU_092895_0_0_1"/>
<dbReference type="InParanoid" id="G2TRU7"/>
<dbReference type="PRO" id="PR:G2TRU7"/>
<dbReference type="Proteomes" id="UP000002485">
    <property type="component" value="Chromosome III"/>
</dbReference>
<dbReference type="GO" id="GO:0005737">
    <property type="term" value="C:cytoplasm"/>
    <property type="evidence" value="ECO:0000314"/>
    <property type="project" value="PomBase"/>
</dbReference>
<dbReference type="GO" id="GO:0016020">
    <property type="term" value="C:membrane"/>
    <property type="evidence" value="ECO:0007669"/>
    <property type="project" value="UniProtKB-KW"/>
</dbReference>
<dbReference type="GO" id="GO:0110134">
    <property type="term" value="P:meiotic drive"/>
    <property type="evidence" value="ECO:0000255"/>
    <property type="project" value="PomBase"/>
</dbReference>
<dbReference type="InterPro" id="IPR004982">
    <property type="entry name" value="WTF"/>
</dbReference>
<dbReference type="Pfam" id="PF03303">
    <property type="entry name" value="WTF"/>
    <property type="match status" value="1"/>
</dbReference>
<feature type="chain" id="PRO_0000416675" description="Wtf element wtf15">
    <location>
        <begin position="1"/>
        <end position="255"/>
    </location>
</feature>
<feature type="transmembrane region" description="Helical" evidence="3">
    <location>
        <begin position="85"/>
        <end position="105"/>
    </location>
</feature>
<feature type="transmembrane region" description="Helical" evidence="3">
    <location>
        <begin position="112"/>
        <end position="132"/>
    </location>
</feature>
<feature type="transmembrane region" description="Helical" evidence="3">
    <location>
        <begin position="162"/>
        <end position="182"/>
    </location>
</feature>
<feature type="transmembrane region" description="Helical" evidence="3">
    <location>
        <begin position="187"/>
        <end position="208"/>
    </location>
</feature>
<feature type="region of interest" description="Disordered" evidence="4">
    <location>
        <begin position="19"/>
        <end position="78"/>
    </location>
</feature>
<feature type="compositionally biased region" description="Polar residues" evidence="4">
    <location>
        <begin position="41"/>
        <end position="60"/>
    </location>
</feature>
<feature type="compositionally biased region" description="Polar residues" evidence="4">
    <location>
        <begin position="67"/>
        <end position="78"/>
    </location>
</feature>
<reference key="1">
    <citation type="journal article" date="2002" name="Nature">
        <title>The genome sequence of Schizosaccharomyces pombe.</title>
        <authorList>
            <person name="Wood V."/>
            <person name="Gwilliam R."/>
            <person name="Rajandream M.A."/>
            <person name="Lyne M.H."/>
            <person name="Lyne R."/>
            <person name="Stewart A."/>
            <person name="Sgouros J.G."/>
            <person name="Peat N."/>
            <person name="Hayles J."/>
            <person name="Baker S.G."/>
            <person name="Basham D."/>
            <person name="Bowman S."/>
            <person name="Brooks K."/>
            <person name="Brown D."/>
            <person name="Brown S."/>
            <person name="Chillingworth T."/>
            <person name="Churcher C.M."/>
            <person name="Collins M."/>
            <person name="Connor R."/>
            <person name="Cronin A."/>
            <person name="Davis P."/>
            <person name="Feltwell T."/>
            <person name="Fraser A."/>
            <person name="Gentles S."/>
            <person name="Goble A."/>
            <person name="Hamlin N."/>
            <person name="Harris D.E."/>
            <person name="Hidalgo J."/>
            <person name="Hodgson G."/>
            <person name="Holroyd S."/>
            <person name="Hornsby T."/>
            <person name="Howarth S."/>
            <person name="Huckle E.J."/>
            <person name="Hunt S."/>
            <person name="Jagels K."/>
            <person name="James K.D."/>
            <person name="Jones L."/>
            <person name="Jones M."/>
            <person name="Leather S."/>
            <person name="McDonald S."/>
            <person name="McLean J."/>
            <person name="Mooney P."/>
            <person name="Moule S."/>
            <person name="Mungall K.L."/>
            <person name="Murphy L.D."/>
            <person name="Niblett D."/>
            <person name="Odell C."/>
            <person name="Oliver K."/>
            <person name="O'Neil S."/>
            <person name="Pearson D."/>
            <person name="Quail M.A."/>
            <person name="Rabbinowitsch E."/>
            <person name="Rutherford K.M."/>
            <person name="Rutter S."/>
            <person name="Saunders D."/>
            <person name="Seeger K."/>
            <person name="Sharp S."/>
            <person name="Skelton J."/>
            <person name="Simmonds M.N."/>
            <person name="Squares R."/>
            <person name="Squares S."/>
            <person name="Stevens K."/>
            <person name="Taylor K."/>
            <person name="Taylor R.G."/>
            <person name="Tivey A."/>
            <person name="Walsh S.V."/>
            <person name="Warren T."/>
            <person name="Whitehead S."/>
            <person name="Woodward J.R."/>
            <person name="Volckaert G."/>
            <person name="Aert R."/>
            <person name="Robben J."/>
            <person name="Grymonprez B."/>
            <person name="Weltjens I."/>
            <person name="Vanstreels E."/>
            <person name="Rieger M."/>
            <person name="Schaefer M."/>
            <person name="Mueller-Auer S."/>
            <person name="Gabel C."/>
            <person name="Fuchs M."/>
            <person name="Duesterhoeft A."/>
            <person name="Fritzc C."/>
            <person name="Holzer E."/>
            <person name="Moestl D."/>
            <person name="Hilbert H."/>
            <person name="Borzym K."/>
            <person name="Langer I."/>
            <person name="Beck A."/>
            <person name="Lehrach H."/>
            <person name="Reinhardt R."/>
            <person name="Pohl T.M."/>
            <person name="Eger P."/>
            <person name="Zimmermann W."/>
            <person name="Wedler H."/>
            <person name="Wambutt R."/>
            <person name="Purnelle B."/>
            <person name="Goffeau A."/>
            <person name="Cadieu E."/>
            <person name="Dreano S."/>
            <person name="Gloux S."/>
            <person name="Lelaure V."/>
            <person name="Mottier S."/>
            <person name="Galibert F."/>
            <person name="Aves S.J."/>
            <person name="Xiang Z."/>
            <person name="Hunt C."/>
            <person name="Moore K."/>
            <person name="Hurst S.M."/>
            <person name="Lucas M."/>
            <person name="Rochet M."/>
            <person name="Gaillardin C."/>
            <person name="Tallada V.A."/>
            <person name="Garzon A."/>
            <person name="Thode G."/>
            <person name="Daga R.R."/>
            <person name="Cruzado L."/>
            <person name="Jimenez J."/>
            <person name="Sanchez M."/>
            <person name="del Rey F."/>
            <person name="Benito J."/>
            <person name="Dominguez A."/>
            <person name="Revuelta J.L."/>
            <person name="Moreno S."/>
            <person name="Armstrong J."/>
            <person name="Forsburg S.L."/>
            <person name="Cerutti L."/>
            <person name="Lowe T."/>
            <person name="McCombie W.R."/>
            <person name="Paulsen I."/>
            <person name="Potashkin J."/>
            <person name="Shpakovski G.V."/>
            <person name="Ussery D."/>
            <person name="Barrell B.G."/>
            <person name="Nurse P."/>
        </authorList>
    </citation>
    <scope>NUCLEOTIDE SEQUENCE [LARGE SCALE GENOMIC DNA]</scope>
    <source>
        <strain>972 / ATCC 24843</strain>
    </source>
</reference>
<reference key="2">
    <citation type="journal article" date="2011" name="Science">
        <title>Comparative functional genomics of the fission yeasts.</title>
        <authorList>
            <person name="Rhind N."/>
            <person name="Chen Z."/>
            <person name="Yassour M."/>
            <person name="Thompson D.A."/>
            <person name="Haas B.J."/>
            <person name="Habib N."/>
            <person name="Wapinski I."/>
            <person name="Roy S."/>
            <person name="Lin M.F."/>
            <person name="Heiman D.I."/>
            <person name="Young S.K."/>
            <person name="Furuya K."/>
            <person name="Guo Y."/>
            <person name="Pidoux A."/>
            <person name="Chen H.M."/>
            <person name="Robbertse B."/>
            <person name="Goldberg J.M."/>
            <person name="Aoki K."/>
            <person name="Bayne E.H."/>
            <person name="Berlin A.M."/>
            <person name="Desjardins C.A."/>
            <person name="Dobbs E."/>
            <person name="Dukaj L."/>
            <person name="Fan L."/>
            <person name="FitzGerald M.G."/>
            <person name="French C."/>
            <person name="Gujja S."/>
            <person name="Hansen K."/>
            <person name="Keifenheim D."/>
            <person name="Levin J.Z."/>
            <person name="Mosher R.A."/>
            <person name="Mueller C.A."/>
            <person name="Pfiffner J."/>
            <person name="Priest M."/>
            <person name="Russ C."/>
            <person name="Smialowska A."/>
            <person name="Swoboda P."/>
            <person name="Sykes S.M."/>
            <person name="Vaughn M."/>
            <person name="Vengrova S."/>
            <person name="Yoder R."/>
            <person name="Zeng Q."/>
            <person name="Allshire R."/>
            <person name="Baulcombe D."/>
            <person name="Birren B.W."/>
            <person name="Brown W."/>
            <person name="Ekwall K."/>
            <person name="Kellis M."/>
            <person name="Leatherwood J."/>
            <person name="Levin H."/>
            <person name="Margalit H."/>
            <person name="Martienssen R."/>
            <person name="Nieduszynski C.A."/>
            <person name="Spatafora J.W."/>
            <person name="Friedman N."/>
            <person name="Dalgaard J.Z."/>
            <person name="Baumann P."/>
            <person name="Niki H."/>
            <person name="Regev A."/>
            <person name="Nusbaum C."/>
        </authorList>
    </citation>
    <scope>REVISION OF GENE MODEL</scope>
</reference>
<reference key="3">
    <citation type="journal article" date="2019" name="Mol. Biol. Evol.">
        <title>Killer meiotic drive and dynamic evolution of the wtf gene family.</title>
        <authorList>
            <person name="Eickbush M.T."/>
            <person name="Young J.M."/>
            <person name="Zanders S.E."/>
        </authorList>
    </citation>
    <scope>LACK OF ALTERNATIVE SPLICING</scope>
</reference>
<reference key="4">
    <citation type="journal article" date="2020" name="PLoS Genet.">
        <title>Dramatically diverse Schizosaccharomyces pombe wtf meiotic drivers all display high gamete-killing efficiency.</title>
        <authorList>
            <person name="Bravo Nunez M.A."/>
            <person name="Sabbarini I.M."/>
            <person name="Eickbush M.T."/>
            <person name="Liang Y."/>
            <person name="Lange J.J."/>
            <person name="Kent A.M."/>
            <person name="Zanders S.E."/>
        </authorList>
    </citation>
    <scope>DEVELOPMENTAL STAGE</scope>
    <scope>DISRUPTION PHENOTYPE</scope>
</reference>
<name>WTF15_SCHPO</name>
<accession>G2TRU7</accession>
<sequence>MSNNYTSLSSSLDEEMGLKAGHEIDLEGSPPSEHNSEEKSTLPSNSDILTSANPVSQASETPDHSIESNTGSTQSPTSHSLLLKFSFCIVYYSYFAIVVLGCVLPFEHTHTFLIAFLVIFGIISVILFSGSIYYYETWTKTVKHFLKKVISPFKKEYIVCAFLKTFVFYGLLKTIEHFLVLLSGDKWGWKCSTLSSILTPVSCISFCLNESVQLRSCSTHLFINTVAWIKSLGGGKNAFENNYNQLNETSPEDLV</sequence>
<gene>
    <name evidence="8" type="primary">wtf15</name>
    <name evidence="8" type="ORF">SPCC663.17</name>
</gene>
<protein>
    <recommendedName>
        <fullName evidence="8">Wtf element wtf15</fullName>
    </recommendedName>
</protein>